<reference key="1">
    <citation type="journal article" date="2003" name="Nat. Genet.">
        <title>Comparative analysis of the genome sequences of Bordetella pertussis, Bordetella parapertussis and Bordetella bronchiseptica.</title>
        <authorList>
            <person name="Parkhill J."/>
            <person name="Sebaihia M."/>
            <person name="Preston A."/>
            <person name="Murphy L.D."/>
            <person name="Thomson N.R."/>
            <person name="Harris D.E."/>
            <person name="Holden M.T.G."/>
            <person name="Churcher C.M."/>
            <person name="Bentley S.D."/>
            <person name="Mungall K.L."/>
            <person name="Cerdeno-Tarraga A.-M."/>
            <person name="Temple L."/>
            <person name="James K.D."/>
            <person name="Harris B."/>
            <person name="Quail M.A."/>
            <person name="Achtman M."/>
            <person name="Atkin R."/>
            <person name="Baker S."/>
            <person name="Basham D."/>
            <person name="Bason N."/>
            <person name="Cherevach I."/>
            <person name="Chillingworth T."/>
            <person name="Collins M."/>
            <person name="Cronin A."/>
            <person name="Davis P."/>
            <person name="Doggett J."/>
            <person name="Feltwell T."/>
            <person name="Goble A."/>
            <person name="Hamlin N."/>
            <person name="Hauser H."/>
            <person name="Holroyd S."/>
            <person name="Jagels K."/>
            <person name="Leather S."/>
            <person name="Moule S."/>
            <person name="Norberczak H."/>
            <person name="O'Neil S."/>
            <person name="Ormond D."/>
            <person name="Price C."/>
            <person name="Rabbinowitsch E."/>
            <person name="Rutter S."/>
            <person name="Sanders M."/>
            <person name="Saunders D."/>
            <person name="Seeger K."/>
            <person name="Sharp S."/>
            <person name="Simmonds M."/>
            <person name="Skelton J."/>
            <person name="Squares R."/>
            <person name="Squares S."/>
            <person name="Stevens K."/>
            <person name="Unwin L."/>
            <person name="Whitehead S."/>
            <person name="Barrell B.G."/>
            <person name="Maskell D.J."/>
        </authorList>
    </citation>
    <scope>NUCLEOTIDE SEQUENCE [LARGE SCALE GENOMIC DNA]</scope>
    <source>
        <strain>ATCC BAA-588 / NCTC 13252 / RB50</strain>
    </source>
</reference>
<protein>
    <recommendedName>
        <fullName evidence="1">Tryptophan synthase alpha chain</fullName>
        <ecNumber evidence="1">4.2.1.20</ecNumber>
    </recommendedName>
</protein>
<accession>Q7WD05</accession>
<gene>
    <name evidence="1" type="primary">trpA</name>
    <name type="ordered locus">BB3773</name>
</gene>
<feature type="chain" id="PRO_0000098747" description="Tryptophan synthase alpha chain">
    <location>
        <begin position="1"/>
        <end position="285"/>
    </location>
</feature>
<feature type="active site" description="Proton acceptor" evidence="1">
    <location>
        <position position="53"/>
    </location>
</feature>
<feature type="active site" description="Proton acceptor" evidence="1">
    <location>
        <position position="64"/>
    </location>
</feature>
<sequence length="285" mass="29846">MTTTDRIAAAFARVSEAGRAAALIPYIAAGDPSPQATVPLMHALVRAGADLVELGVPFSDPMADGPVVQRAAERAIAQGVGLRRVLELVADFRRDDSVTPVVLMGYANPIERMGQRAFAQAAQAAGVDGVLVVDYPPEEVDEFAAMLAEAGVAPIFLLAPTSTEARIEAIGRVARGYVYYVSLKGVTGAGSLDTDDVARKLALIRRHVHIPVGVGFGIRDAASAQRIAAHADAVVIGSKLIETMEQAGAQAGADQKNEAAIAAAQQWLHTIRLALDDVKRENAPA</sequence>
<proteinExistence type="inferred from homology"/>
<dbReference type="EC" id="4.2.1.20" evidence="1"/>
<dbReference type="EMBL" id="BX640448">
    <property type="protein sequence ID" value="CAE35747.1"/>
    <property type="molecule type" value="Genomic_DNA"/>
</dbReference>
<dbReference type="RefSeq" id="WP_003813844.1">
    <property type="nucleotide sequence ID" value="NC_002927.3"/>
</dbReference>
<dbReference type="SMR" id="Q7WD05"/>
<dbReference type="GeneID" id="56477744"/>
<dbReference type="KEGG" id="bbr:BB3773"/>
<dbReference type="eggNOG" id="COG0159">
    <property type="taxonomic scope" value="Bacteria"/>
</dbReference>
<dbReference type="HOGENOM" id="CLU_016734_0_0_4"/>
<dbReference type="UniPathway" id="UPA00035">
    <property type="reaction ID" value="UER00044"/>
</dbReference>
<dbReference type="Proteomes" id="UP000001027">
    <property type="component" value="Chromosome"/>
</dbReference>
<dbReference type="GO" id="GO:0005829">
    <property type="term" value="C:cytosol"/>
    <property type="evidence" value="ECO:0007669"/>
    <property type="project" value="TreeGrafter"/>
</dbReference>
<dbReference type="GO" id="GO:0004834">
    <property type="term" value="F:tryptophan synthase activity"/>
    <property type="evidence" value="ECO:0007669"/>
    <property type="project" value="UniProtKB-UniRule"/>
</dbReference>
<dbReference type="CDD" id="cd04724">
    <property type="entry name" value="Tryptophan_synthase_alpha"/>
    <property type="match status" value="1"/>
</dbReference>
<dbReference type="FunFam" id="3.20.20.70:FF:000037">
    <property type="entry name" value="Tryptophan synthase alpha chain"/>
    <property type="match status" value="1"/>
</dbReference>
<dbReference type="Gene3D" id="3.20.20.70">
    <property type="entry name" value="Aldolase class I"/>
    <property type="match status" value="1"/>
</dbReference>
<dbReference type="HAMAP" id="MF_00131">
    <property type="entry name" value="Trp_synth_alpha"/>
    <property type="match status" value="1"/>
</dbReference>
<dbReference type="InterPro" id="IPR013785">
    <property type="entry name" value="Aldolase_TIM"/>
</dbReference>
<dbReference type="InterPro" id="IPR011060">
    <property type="entry name" value="RibuloseP-bd_barrel"/>
</dbReference>
<dbReference type="InterPro" id="IPR018204">
    <property type="entry name" value="Trp_synthase_alpha_AS"/>
</dbReference>
<dbReference type="InterPro" id="IPR002028">
    <property type="entry name" value="Trp_synthase_suA"/>
</dbReference>
<dbReference type="NCBIfam" id="TIGR00262">
    <property type="entry name" value="trpA"/>
    <property type="match status" value="1"/>
</dbReference>
<dbReference type="PANTHER" id="PTHR43406:SF1">
    <property type="entry name" value="TRYPTOPHAN SYNTHASE ALPHA CHAIN, CHLOROPLASTIC"/>
    <property type="match status" value="1"/>
</dbReference>
<dbReference type="PANTHER" id="PTHR43406">
    <property type="entry name" value="TRYPTOPHAN SYNTHASE, ALPHA CHAIN"/>
    <property type="match status" value="1"/>
</dbReference>
<dbReference type="Pfam" id="PF00290">
    <property type="entry name" value="Trp_syntA"/>
    <property type="match status" value="1"/>
</dbReference>
<dbReference type="SUPFAM" id="SSF51366">
    <property type="entry name" value="Ribulose-phoshate binding barrel"/>
    <property type="match status" value="1"/>
</dbReference>
<dbReference type="PROSITE" id="PS00167">
    <property type="entry name" value="TRP_SYNTHASE_ALPHA"/>
    <property type="match status" value="1"/>
</dbReference>
<organism>
    <name type="scientific">Bordetella bronchiseptica (strain ATCC BAA-588 / NCTC 13252 / RB50)</name>
    <name type="common">Alcaligenes bronchisepticus</name>
    <dbReference type="NCBI Taxonomy" id="257310"/>
    <lineage>
        <taxon>Bacteria</taxon>
        <taxon>Pseudomonadati</taxon>
        <taxon>Pseudomonadota</taxon>
        <taxon>Betaproteobacteria</taxon>
        <taxon>Burkholderiales</taxon>
        <taxon>Alcaligenaceae</taxon>
        <taxon>Bordetella</taxon>
    </lineage>
</organism>
<evidence type="ECO:0000255" key="1">
    <source>
        <dbReference type="HAMAP-Rule" id="MF_00131"/>
    </source>
</evidence>
<name>TRPA_BORBR</name>
<comment type="function">
    <text evidence="1">The alpha subunit is responsible for the aldol cleavage of indoleglycerol phosphate to indole and glyceraldehyde 3-phosphate.</text>
</comment>
<comment type="catalytic activity">
    <reaction evidence="1">
        <text>(1S,2R)-1-C-(indol-3-yl)glycerol 3-phosphate + L-serine = D-glyceraldehyde 3-phosphate + L-tryptophan + H2O</text>
        <dbReference type="Rhea" id="RHEA:10532"/>
        <dbReference type="ChEBI" id="CHEBI:15377"/>
        <dbReference type="ChEBI" id="CHEBI:33384"/>
        <dbReference type="ChEBI" id="CHEBI:57912"/>
        <dbReference type="ChEBI" id="CHEBI:58866"/>
        <dbReference type="ChEBI" id="CHEBI:59776"/>
        <dbReference type="EC" id="4.2.1.20"/>
    </reaction>
</comment>
<comment type="pathway">
    <text evidence="1">Amino-acid biosynthesis; L-tryptophan biosynthesis; L-tryptophan from chorismate: step 5/5.</text>
</comment>
<comment type="subunit">
    <text evidence="1">Tetramer of two alpha and two beta chains.</text>
</comment>
<comment type="similarity">
    <text evidence="1">Belongs to the TrpA family.</text>
</comment>
<keyword id="KW-0028">Amino-acid biosynthesis</keyword>
<keyword id="KW-0057">Aromatic amino acid biosynthesis</keyword>
<keyword id="KW-0456">Lyase</keyword>
<keyword id="KW-0822">Tryptophan biosynthesis</keyword>